<gene>
    <name type="ordered locus">PF1552</name>
</gene>
<accession>Q8U0N4</accession>
<proteinExistence type="inferred from homology"/>
<evidence type="ECO:0000250" key="1"/>
<evidence type="ECO:0000255" key="2">
    <source>
        <dbReference type="HAMAP-Rule" id="MF_01222"/>
    </source>
</evidence>
<dbReference type="EMBL" id="AE009950">
    <property type="protein sequence ID" value="AAL81676.1"/>
    <property type="molecule type" value="Genomic_DNA"/>
</dbReference>
<dbReference type="RefSeq" id="WP_011012699.1">
    <property type="nucleotide sequence ID" value="NZ_CP023154.1"/>
</dbReference>
<dbReference type="SMR" id="Q8U0N4"/>
<dbReference type="STRING" id="186497.PF1552"/>
<dbReference type="PaxDb" id="186497-PF1552"/>
<dbReference type="KEGG" id="pfu:PF1552"/>
<dbReference type="PATRIC" id="fig|186497.12.peg.1618"/>
<dbReference type="eggNOG" id="arCOG04055">
    <property type="taxonomic scope" value="Archaea"/>
</dbReference>
<dbReference type="HOGENOM" id="CLU_111362_3_0_2"/>
<dbReference type="OrthoDB" id="8831at2157"/>
<dbReference type="PhylomeDB" id="Q8U0N4"/>
<dbReference type="Proteomes" id="UP000001013">
    <property type="component" value="Chromosome"/>
</dbReference>
<dbReference type="GO" id="GO:0005509">
    <property type="term" value="F:calcium ion binding"/>
    <property type="evidence" value="ECO:0007669"/>
    <property type="project" value="UniProtKB-UniRule"/>
</dbReference>
<dbReference type="GO" id="GO:0006388">
    <property type="term" value="P:tRNA splicing, via endonucleolytic cleavage and ligation"/>
    <property type="evidence" value="ECO:0007669"/>
    <property type="project" value="UniProtKB-UniRule"/>
</dbReference>
<dbReference type="FunFam" id="3.55.10.10:FF:000002">
    <property type="entry name" value="Archease, putative"/>
    <property type="match status" value="1"/>
</dbReference>
<dbReference type="Gene3D" id="3.55.10.10">
    <property type="entry name" value="Archease domain"/>
    <property type="match status" value="1"/>
</dbReference>
<dbReference type="HAMAP" id="MF_01222">
    <property type="entry name" value="Archease_arch"/>
    <property type="match status" value="1"/>
</dbReference>
<dbReference type="InterPro" id="IPR002804">
    <property type="entry name" value="Archease"/>
</dbReference>
<dbReference type="InterPro" id="IPR022952">
    <property type="entry name" value="Archease_arc"/>
</dbReference>
<dbReference type="InterPro" id="IPR023572">
    <property type="entry name" value="Archease_dom"/>
</dbReference>
<dbReference type="InterPro" id="IPR036820">
    <property type="entry name" value="Archease_dom_sf"/>
</dbReference>
<dbReference type="NCBIfam" id="NF001617">
    <property type="entry name" value="PRK00407.1"/>
    <property type="match status" value="1"/>
</dbReference>
<dbReference type="PANTHER" id="PTHR12682">
    <property type="entry name" value="ARCHEASE"/>
    <property type="match status" value="1"/>
</dbReference>
<dbReference type="PANTHER" id="PTHR12682:SF11">
    <property type="entry name" value="PROTEIN ARCHEASE"/>
    <property type="match status" value="1"/>
</dbReference>
<dbReference type="Pfam" id="PF01951">
    <property type="entry name" value="Archease"/>
    <property type="match status" value="1"/>
</dbReference>
<dbReference type="SUPFAM" id="SSF69819">
    <property type="entry name" value="MTH1598-like"/>
    <property type="match status" value="1"/>
</dbReference>
<sequence length="142" mass="16628">MRQWEHYEHTADIGIRGYGDTLEEAFEAVALALFDVIVNVRKIEKKVEIDIEVEGEDLESLLYSFLEELLYLHDIEGLVFGDFKVKIEQKDGKYILRGKAYGEKFDPEKHEPKEEVKAITYHDMKIERLPDGRWMAQLVPDI</sequence>
<feature type="chain" id="PRO_0000068849" description="Protein archease">
    <location>
        <begin position="1"/>
        <end position="142"/>
    </location>
</feature>
<feature type="binding site" evidence="1">
    <location>
        <position position="12"/>
    </location>
    <ligand>
        <name>Ca(2+)</name>
        <dbReference type="ChEBI" id="CHEBI:29108"/>
    </ligand>
</feature>
<feature type="binding site" evidence="1">
    <location>
        <position position="141"/>
    </location>
    <ligand>
        <name>Ca(2+)</name>
        <dbReference type="ChEBI" id="CHEBI:29108"/>
    </ligand>
</feature>
<feature type="binding site" evidence="1">
    <location>
        <position position="142"/>
    </location>
    <ligand>
        <name>Ca(2+)</name>
        <dbReference type="ChEBI" id="CHEBI:29108"/>
    </ligand>
</feature>
<organism>
    <name type="scientific">Pyrococcus furiosus (strain ATCC 43587 / DSM 3638 / JCM 8422 / Vc1)</name>
    <dbReference type="NCBI Taxonomy" id="186497"/>
    <lineage>
        <taxon>Archaea</taxon>
        <taxon>Methanobacteriati</taxon>
        <taxon>Methanobacteriota</taxon>
        <taxon>Thermococci</taxon>
        <taxon>Thermococcales</taxon>
        <taxon>Thermococcaceae</taxon>
        <taxon>Pyrococcus</taxon>
    </lineage>
</organism>
<reference key="1">
    <citation type="journal article" date="1999" name="Genetics">
        <title>Divergence of the hyperthermophilic archaea Pyrococcus furiosus and P. horikoshii inferred from complete genomic sequences.</title>
        <authorList>
            <person name="Maeder D.L."/>
            <person name="Weiss R.B."/>
            <person name="Dunn D.M."/>
            <person name="Cherry J.L."/>
            <person name="Gonzalez J.M."/>
            <person name="DiRuggiero J."/>
            <person name="Robb F.T."/>
        </authorList>
    </citation>
    <scope>NUCLEOTIDE SEQUENCE [LARGE SCALE GENOMIC DNA]</scope>
    <source>
        <strain>ATCC 43587 / DSM 3638 / JCM 8422 / Vc1</strain>
    </source>
</reference>
<protein>
    <recommendedName>
        <fullName evidence="2">Protein archease</fullName>
    </recommendedName>
</protein>
<comment type="function">
    <text evidence="1">Activates the tRNA-splicing ligase complex by facilitating the enzymatic turnover of catalytic subunit RtcB. Acts by promoting the guanylylation of RtcB, a key intermediate step in tRNA ligation. Can also alter the NTP specificity of RtcB such that ATP, dGTP or ITP is used efficiently (By similarity).</text>
</comment>
<comment type="similarity">
    <text evidence="2">Belongs to the archease family.</text>
</comment>
<name>ARCH_PYRFU</name>
<keyword id="KW-0106">Calcium</keyword>
<keyword id="KW-0479">Metal-binding</keyword>
<keyword id="KW-1185">Reference proteome</keyword>
<keyword id="KW-0819">tRNA processing</keyword>